<reference key="1">
    <citation type="submission" date="2008-01" db="EMBL/GenBank/DDBJ databases">
        <title>Complete sequence of Shewanella halifaxensis HAW-EB4.</title>
        <authorList>
            <consortium name="US DOE Joint Genome Institute"/>
            <person name="Copeland A."/>
            <person name="Lucas S."/>
            <person name="Lapidus A."/>
            <person name="Glavina del Rio T."/>
            <person name="Dalin E."/>
            <person name="Tice H."/>
            <person name="Bruce D."/>
            <person name="Goodwin L."/>
            <person name="Pitluck S."/>
            <person name="Sims D."/>
            <person name="Brettin T."/>
            <person name="Detter J.C."/>
            <person name="Han C."/>
            <person name="Kuske C.R."/>
            <person name="Schmutz J."/>
            <person name="Larimer F."/>
            <person name="Land M."/>
            <person name="Hauser L."/>
            <person name="Kyrpides N."/>
            <person name="Kim E."/>
            <person name="Zhao J.-S."/>
            <person name="Richardson P."/>
        </authorList>
    </citation>
    <scope>NUCLEOTIDE SEQUENCE [LARGE SCALE GENOMIC DNA]</scope>
    <source>
        <strain>HAW-EB4</strain>
    </source>
</reference>
<evidence type="ECO:0000255" key="1">
    <source>
        <dbReference type="HAMAP-Rule" id="MF_00102"/>
    </source>
</evidence>
<evidence type="ECO:0000305" key="2"/>
<name>DAPB_SHEHH</name>
<accession>B0TQB8</accession>
<gene>
    <name evidence="1" type="primary">dapB</name>
    <name type="ordered locus">Shal_3163</name>
</gene>
<organism>
    <name type="scientific">Shewanella halifaxensis (strain HAW-EB4)</name>
    <dbReference type="NCBI Taxonomy" id="458817"/>
    <lineage>
        <taxon>Bacteria</taxon>
        <taxon>Pseudomonadati</taxon>
        <taxon>Pseudomonadota</taxon>
        <taxon>Gammaproteobacteria</taxon>
        <taxon>Alteromonadales</taxon>
        <taxon>Shewanellaceae</taxon>
        <taxon>Shewanella</taxon>
    </lineage>
</organism>
<dbReference type="EC" id="1.17.1.8" evidence="1"/>
<dbReference type="EMBL" id="CP000931">
    <property type="protein sequence ID" value="ABZ77710.1"/>
    <property type="molecule type" value="Genomic_DNA"/>
</dbReference>
<dbReference type="RefSeq" id="WP_012278233.1">
    <property type="nucleotide sequence ID" value="NC_010334.1"/>
</dbReference>
<dbReference type="SMR" id="B0TQB8"/>
<dbReference type="STRING" id="458817.Shal_3163"/>
<dbReference type="KEGG" id="shl:Shal_3163"/>
<dbReference type="eggNOG" id="COG0289">
    <property type="taxonomic scope" value="Bacteria"/>
</dbReference>
<dbReference type="HOGENOM" id="CLU_047479_2_1_6"/>
<dbReference type="OrthoDB" id="9790352at2"/>
<dbReference type="UniPathway" id="UPA00034">
    <property type="reaction ID" value="UER00018"/>
</dbReference>
<dbReference type="Proteomes" id="UP000001317">
    <property type="component" value="Chromosome"/>
</dbReference>
<dbReference type="GO" id="GO:0005829">
    <property type="term" value="C:cytosol"/>
    <property type="evidence" value="ECO:0007669"/>
    <property type="project" value="TreeGrafter"/>
</dbReference>
<dbReference type="GO" id="GO:0008839">
    <property type="term" value="F:4-hydroxy-tetrahydrodipicolinate reductase"/>
    <property type="evidence" value="ECO:0007669"/>
    <property type="project" value="UniProtKB-EC"/>
</dbReference>
<dbReference type="GO" id="GO:0051287">
    <property type="term" value="F:NAD binding"/>
    <property type="evidence" value="ECO:0007669"/>
    <property type="project" value="UniProtKB-UniRule"/>
</dbReference>
<dbReference type="GO" id="GO:0050661">
    <property type="term" value="F:NADP binding"/>
    <property type="evidence" value="ECO:0007669"/>
    <property type="project" value="UniProtKB-UniRule"/>
</dbReference>
<dbReference type="GO" id="GO:0016726">
    <property type="term" value="F:oxidoreductase activity, acting on CH or CH2 groups, NAD or NADP as acceptor"/>
    <property type="evidence" value="ECO:0007669"/>
    <property type="project" value="UniProtKB-UniRule"/>
</dbReference>
<dbReference type="GO" id="GO:0019877">
    <property type="term" value="P:diaminopimelate biosynthetic process"/>
    <property type="evidence" value="ECO:0007669"/>
    <property type="project" value="UniProtKB-UniRule"/>
</dbReference>
<dbReference type="GO" id="GO:0009089">
    <property type="term" value="P:lysine biosynthetic process via diaminopimelate"/>
    <property type="evidence" value="ECO:0007669"/>
    <property type="project" value="UniProtKB-UniRule"/>
</dbReference>
<dbReference type="CDD" id="cd02274">
    <property type="entry name" value="DHDPR_N"/>
    <property type="match status" value="1"/>
</dbReference>
<dbReference type="FunFam" id="3.30.360.10:FF:000004">
    <property type="entry name" value="4-hydroxy-tetrahydrodipicolinate reductase"/>
    <property type="match status" value="1"/>
</dbReference>
<dbReference type="FunFam" id="3.40.50.720:FF:000048">
    <property type="entry name" value="4-hydroxy-tetrahydrodipicolinate reductase"/>
    <property type="match status" value="1"/>
</dbReference>
<dbReference type="Gene3D" id="3.30.360.10">
    <property type="entry name" value="Dihydrodipicolinate Reductase, domain 2"/>
    <property type="match status" value="1"/>
</dbReference>
<dbReference type="Gene3D" id="3.40.50.720">
    <property type="entry name" value="NAD(P)-binding Rossmann-like Domain"/>
    <property type="match status" value="1"/>
</dbReference>
<dbReference type="HAMAP" id="MF_00102">
    <property type="entry name" value="DapB"/>
    <property type="match status" value="1"/>
</dbReference>
<dbReference type="InterPro" id="IPR022663">
    <property type="entry name" value="DapB_C"/>
</dbReference>
<dbReference type="InterPro" id="IPR000846">
    <property type="entry name" value="DapB_N"/>
</dbReference>
<dbReference type="InterPro" id="IPR022664">
    <property type="entry name" value="DapB_N_CS"/>
</dbReference>
<dbReference type="InterPro" id="IPR023940">
    <property type="entry name" value="DHDPR_bac"/>
</dbReference>
<dbReference type="InterPro" id="IPR036291">
    <property type="entry name" value="NAD(P)-bd_dom_sf"/>
</dbReference>
<dbReference type="NCBIfam" id="TIGR00036">
    <property type="entry name" value="dapB"/>
    <property type="match status" value="1"/>
</dbReference>
<dbReference type="PANTHER" id="PTHR20836:SF0">
    <property type="entry name" value="4-HYDROXY-TETRAHYDRODIPICOLINATE REDUCTASE 1, CHLOROPLASTIC-RELATED"/>
    <property type="match status" value="1"/>
</dbReference>
<dbReference type="PANTHER" id="PTHR20836">
    <property type="entry name" value="DIHYDRODIPICOLINATE REDUCTASE"/>
    <property type="match status" value="1"/>
</dbReference>
<dbReference type="Pfam" id="PF05173">
    <property type="entry name" value="DapB_C"/>
    <property type="match status" value="1"/>
</dbReference>
<dbReference type="Pfam" id="PF01113">
    <property type="entry name" value="DapB_N"/>
    <property type="match status" value="1"/>
</dbReference>
<dbReference type="PIRSF" id="PIRSF000161">
    <property type="entry name" value="DHPR"/>
    <property type="match status" value="1"/>
</dbReference>
<dbReference type="SUPFAM" id="SSF55347">
    <property type="entry name" value="Glyceraldehyde-3-phosphate dehydrogenase-like, C-terminal domain"/>
    <property type="match status" value="1"/>
</dbReference>
<dbReference type="SUPFAM" id="SSF51735">
    <property type="entry name" value="NAD(P)-binding Rossmann-fold domains"/>
    <property type="match status" value="1"/>
</dbReference>
<dbReference type="PROSITE" id="PS01298">
    <property type="entry name" value="DAPB"/>
    <property type="match status" value="1"/>
</dbReference>
<proteinExistence type="inferred from homology"/>
<comment type="function">
    <text evidence="1">Catalyzes the conversion of 4-hydroxy-tetrahydrodipicolinate (HTPA) to tetrahydrodipicolinate.</text>
</comment>
<comment type="catalytic activity">
    <reaction evidence="1">
        <text>(S)-2,3,4,5-tetrahydrodipicolinate + NAD(+) + H2O = (2S,4S)-4-hydroxy-2,3,4,5-tetrahydrodipicolinate + NADH + H(+)</text>
        <dbReference type="Rhea" id="RHEA:35323"/>
        <dbReference type="ChEBI" id="CHEBI:15377"/>
        <dbReference type="ChEBI" id="CHEBI:15378"/>
        <dbReference type="ChEBI" id="CHEBI:16845"/>
        <dbReference type="ChEBI" id="CHEBI:57540"/>
        <dbReference type="ChEBI" id="CHEBI:57945"/>
        <dbReference type="ChEBI" id="CHEBI:67139"/>
        <dbReference type="EC" id="1.17.1.8"/>
    </reaction>
</comment>
<comment type="catalytic activity">
    <reaction evidence="1">
        <text>(S)-2,3,4,5-tetrahydrodipicolinate + NADP(+) + H2O = (2S,4S)-4-hydroxy-2,3,4,5-tetrahydrodipicolinate + NADPH + H(+)</text>
        <dbReference type="Rhea" id="RHEA:35331"/>
        <dbReference type="ChEBI" id="CHEBI:15377"/>
        <dbReference type="ChEBI" id="CHEBI:15378"/>
        <dbReference type="ChEBI" id="CHEBI:16845"/>
        <dbReference type="ChEBI" id="CHEBI:57783"/>
        <dbReference type="ChEBI" id="CHEBI:58349"/>
        <dbReference type="ChEBI" id="CHEBI:67139"/>
        <dbReference type="EC" id="1.17.1.8"/>
    </reaction>
</comment>
<comment type="pathway">
    <text evidence="1">Amino-acid biosynthesis; L-lysine biosynthesis via DAP pathway; (S)-tetrahydrodipicolinate from L-aspartate: step 4/4.</text>
</comment>
<comment type="subcellular location">
    <subcellularLocation>
        <location evidence="1">Cytoplasm</location>
    </subcellularLocation>
</comment>
<comment type="similarity">
    <text evidence="1">Belongs to the DapB family.</text>
</comment>
<comment type="caution">
    <text evidence="2">Was originally thought to be a dihydrodipicolinate reductase (DHDPR), catalyzing the conversion of dihydrodipicolinate to tetrahydrodipicolinate. However, it was shown in E.coli that the substrate of the enzymatic reaction is not dihydrodipicolinate (DHDP) but in fact (2S,4S)-4-hydroxy-2,3,4,5-tetrahydrodipicolinic acid (HTPA), the product released by the DapA-catalyzed reaction.</text>
</comment>
<sequence length="271" mass="29060">MTERVRVAITGGSGRMGRTLIEAAKQNGIILLGAAIERAGSTLMGVDAGELAGVGSMNVAITDSLDKAVNDFDVLIDFTSPEASVFHTDWCAKNGKAIVIGTTGFNHAQKEQISAYADQIPIVMAPNMAVGVNLMWKLLEVTAEVMGHYCDIEIIEGHHRYKKDAPSGTALKMGEVIAETLGRDLEKCAVYGREGMTGERDRETIGFATVRAGDIVGEHTALFADIGERLEITHKASSRMTFANGAMRAATWLVEQDAGLYDMQQVLGLKA</sequence>
<feature type="chain" id="PRO_1000075688" description="4-hydroxy-tetrahydrodipicolinate reductase">
    <location>
        <begin position="1"/>
        <end position="271"/>
    </location>
</feature>
<feature type="active site" description="Proton donor/acceptor" evidence="1">
    <location>
        <position position="158"/>
    </location>
</feature>
<feature type="active site" description="Proton donor" evidence="1">
    <location>
        <position position="162"/>
    </location>
</feature>
<feature type="binding site" evidence="1">
    <location>
        <begin position="11"/>
        <end position="16"/>
    </location>
    <ligand>
        <name>NAD(+)</name>
        <dbReference type="ChEBI" id="CHEBI:57540"/>
    </ligand>
</feature>
<feature type="binding site" evidence="1">
    <location>
        <position position="37"/>
    </location>
    <ligand>
        <name>NAD(+)</name>
        <dbReference type="ChEBI" id="CHEBI:57540"/>
    </ligand>
</feature>
<feature type="binding site" evidence="1">
    <location>
        <position position="38"/>
    </location>
    <ligand>
        <name>NADP(+)</name>
        <dbReference type="ChEBI" id="CHEBI:58349"/>
    </ligand>
</feature>
<feature type="binding site" evidence="1">
    <location>
        <begin position="101"/>
        <end position="103"/>
    </location>
    <ligand>
        <name>NAD(+)</name>
        <dbReference type="ChEBI" id="CHEBI:57540"/>
    </ligand>
</feature>
<feature type="binding site" evidence="1">
    <location>
        <begin position="125"/>
        <end position="128"/>
    </location>
    <ligand>
        <name>NAD(+)</name>
        <dbReference type="ChEBI" id="CHEBI:57540"/>
    </ligand>
</feature>
<feature type="binding site" evidence="1">
    <location>
        <position position="159"/>
    </location>
    <ligand>
        <name>(S)-2,3,4,5-tetrahydrodipicolinate</name>
        <dbReference type="ChEBI" id="CHEBI:16845"/>
    </ligand>
</feature>
<feature type="binding site" evidence="1">
    <location>
        <begin position="168"/>
        <end position="169"/>
    </location>
    <ligand>
        <name>(S)-2,3,4,5-tetrahydrodipicolinate</name>
        <dbReference type="ChEBI" id="CHEBI:16845"/>
    </ligand>
</feature>
<protein>
    <recommendedName>
        <fullName evidence="1">4-hydroxy-tetrahydrodipicolinate reductase</fullName>
        <shortName evidence="1">HTPA reductase</shortName>
        <ecNumber evidence="1">1.17.1.8</ecNumber>
    </recommendedName>
</protein>
<keyword id="KW-0028">Amino-acid biosynthesis</keyword>
<keyword id="KW-0963">Cytoplasm</keyword>
<keyword id="KW-0220">Diaminopimelate biosynthesis</keyword>
<keyword id="KW-0457">Lysine biosynthesis</keyword>
<keyword id="KW-0520">NAD</keyword>
<keyword id="KW-0521">NADP</keyword>
<keyword id="KW-0560">Oxidoreductase</keyword>